<protein>
    <recommendedName>
        <fullName evidence="2">Cytochrome f</fullName>
    </recommendedName>
</protein>
<sequence>MKNTFSWIKKEITRSISLSLMIYIITRTSISNAYPIFAQQGYENPREATGRIVCANCHLANKPVDIEVPQAVLPDTVFEAVVRIPYDRQVKQVLANGKKGGLNVGAVLILPEGFELAPPARISPEMKERIGNPSFQSYRPTKKNILVIGPVPGQKYSEITFPILSPDPATNKDVHFLKYPIYVGGNRGRGQIYPDGSKSNNTVYNATAAGIVSKIIRKEKGGYEITITDASDGRQVVDIIPSGPELLVSEGESIKLDQPLTSNPNVGGFGQGDAEVVLQDPLRVQGLLFFLASVILAQIFLVLKKKQFEKVQLSEMNF</sequence>
<comment type="function">
    <text evidence="2">Component of the cytochrome b6-f complex, which mediates electron transfer between photosystem II (PSII) and photosystem I (PSI), cyclic electron flow around PSI, and state transitions.</text>
</comment>
<comment type="cofactor">
    <cofactor evidence="2">
        <name>heme</name>
        <dbReference type="ChEBI" id="CHEBI:30413"/>
    </cofactor>
    <text evidence="2">Binds 1 heme group covalently.</text>
</comment>
<comment type="subunit">
    <text evidence="1">The 4 large subunits of the cytochrome b6-f complex are cytochrome b6, subunit IV (17 kDa polypeptide, petD), cytochrome f and the Rieske protein, while the 4 small subunits are PetG, PetL, PetM and PetN. The complex functions as a dimer (By similarity).</text>
</comment>
<comment type="subcellular location">
    <subcellularLocation>
        <location evidence="2">Plastid</location>
        <location evidence="2">Chloroplast thylakoid membrane</location>
        <topology evidence="2">Single-pass membrane protein</topology>
    </subcellularLocation>
</comment>
<comment type="similarity">
    <text evidence="2">Belongs to the cytochrome f family.</text>
</comment>
<feature type="signal peptide" evidence="2">
    <location>
        <begin position="1"/>
        <end position="33"/>
    </location>
</feature>
<feature type="chain" id="PRO_0000342076" description="Cytochrome f">
    <location>
        <begin position="34"/>
        <end position="318"/>
    </location>
</feature>
<feature type="transmembrane region" description="Helical" evidence="2">
    <location>
        <begin position="284"/>
        <end position="304"/>
    </location>
</feature>
<feature type="binding site" description="axial binding residue" evidence="2">
    <location>
        <position position="34"/>
    </location>
    <ligand>
        <name>heme</name>
        <dbReference type="ChEBI" id="CHEBI:30413"/>
    </ligand>
    <ligandPart>
        <name>Fe</name>
        <dbReference type="ChEBI" id="CHEBI:18248"/>
    </ligandPart>
</feature>
<feature type="binding site" description="covalent" evidence="2">
    <location>
        <position position="54"/>
    </location>
    <ligand>
        <name>heme</name>
        <dbReference type="ChEBI" id="CHEBI:30413"/>
    </ligand>
</feature>
<feature type="binding site" description="covalent" evidence="2">
    <location>
        <position position="57"/>
    </location>
    <ligand>
        <name>heme</name>
        <dbReference type="ChEBI" id="CHEBI:30413"/>
    </ligand>
</feature>
<feature type="binding site" description="axial binding residue" evidence="2">
    <location>
        <position position="58"/>
    </location>
    <ligand>
        <name>heme</name>
        <dbReference type="ChEBI" id="CHEBI:30413"/>
    </ligand>
    <ligandPart>
        <name>Fe</name>
        <dbReference type="ChEBI" id="CHEBI:18248"/>
    </ligandPart>
</feature>
<proteinExistence type="inferred from homology"/>
<keyword id="KW-0150">Chloroplast</keyword>
<keyword id="KW-0249">Electron transport</keyword>
<keyword id="KW-0349">Heme</keyword>
<keyword id="KW-0408">Iron</keyword>
<keyword id="KW-0472">Membrane</keyword>
<keyword id="KW-0479">Metal-binding</keyword>
<keyword id="KW-0602">Photosynthesis</keyword>
<keyword id="KW-0934">Plastid</keyword>
<keyword id="KW-0732">Signal</keyword>
<keyword id="KW-0793">Thylakoid</keyword>
<keyword id="KW-0812">Transmembrane</keyword>
<keyword id="KW-1133">Transmembrane helix</keyword>
<keyword id="KW-0813">Transport</keyword>
<gene>
    <name evidence="2" type="primary">petA</name>
</gene>
<reference key="1">
    <citation type="journal article" date="2008" name="Nucleic Acids Res.">
        <title>The complete nucleotide sequences of the five genetically distinct plastid genomes of Oenothera, subsection Oenothera: I. Sequence evaluation and plastome evolution.</title>
        <authorList>
            <person name="Greiner S."/>
            <person name="Wang X."/>
            <person name="Rauwolf U."/>
            <person name="Silber M.V."/>
            <person name="Mayer K."/>
            <person name="Meurer J."/>
            <person name="Haberer G."/>
            <person name="Herrmann R.G."/>
        </authorList>
    </citation>
    <scope>NUCLEOTIDE SEQUENCE [LARGE SCALE GENOMIC DNA]</scope>
    <source>
        <strain>cv. Suaveolens Grado</strain>
    </source>
</reference>
<evidence type="ECO:0000250" key="1"/>
<evidence type="ECO:0000255" key="2">
    <source>
        <dbReference type="HAMAP-Rule" id="MF_00610"/>
    </source>
</evidence>
<organism>
    <name type="scientific">Oenothera biennis</name>
    <name type="common">German evening primrose</name>
    <name type="synonym">Onagra biennis</name>
    <dbReference type="NCBI Taxonomy" id="3942"/>
    <lineage>
        <taxon>Eukaryota</taxon>
        <taxon>Viridiplantae</taxon>
        <taxon>Streptophyta</taxon>
        <taxon>Embryophyta</taxon>
        <taxon>Tracheophyta</taxon>
        <taxon>Spermatophyta</taxon>
        <taxon>Magnoliopsida</taxon>
        <taxon>eudicotyledons</taxon>
        <taxon>Gunneridae</taxon>
        <taxon>Pentapetalae</taxon>
        <taxon>rosids</taxon>
        <taxon>malvids</taxon>
        <taxon>Myrtales</taxon>
        <taxon>Onagraceae</taxon>
        <taxon>Onagroideae</taxon>
        <taxon>Onagreae</taxon>
        <taxon>Oenothera</taxon>
    </lineage>
</organism>
<accession>B0Z4X3</accession>
<name>CYF_OENBI</name>
<dbReference type="EMBL" id="EU262889">
    <property type="protein sequence ID" value="ABW98885.1"/>
    <property type="molecule type" value="Genomic_DNA"/>
</dbReference>
<dbReference type="RefSeq" id="YP_001687380.1">
    <property type="nucleotide sequence ID" value="NC_010361.1"/>
</dbReference>
<dbReference type="SMR" id="B0Z4X3"/>
<dbReference type="GeneID" id="5952023"/>
<dbReference type="GO" id="GO:0009535">
    <property type="term" value="C:chloroplast thylakoid membrane"/>
    <property type="evidence" value="ECO:0007669"/>
    <property type="project" value="UniProtKB-SubCell"/>
</dbReference>
<dbReference type="GO" id="GO:0009055">
    <property type="term" value="F:electron transfer activity"/>
    <property type="evidence" value="ECO:0007669"/>
    <property type="project" value="UniProtKB-UniRule"/>
</dbReference>
<dbReference type="GO" id="GO:0020037">
    <property type="term" value="F:heme binding"/>
    <property type="evidence" value="ECO:0007669"/>
    <property type="project" value="InterPro"/>
</dbReference>
<dbReference type="GO" id="GO:0005506">
    <property type="term" value="F:iron ion binding"/>
    <property type="evidence" value="ECO:0007669"/>
    <property type="project" value="InterPro"/>
</dbReference>
<dbReference type="GO" id="GO:0015979">
    <property type="term" value="P:photosynthesis"/>
    <property type="evidence" value="ECO:0007669"/>
    <property type="project" value="UniProtKB-UniRule"/>
</dbReference>
<dbReference type="FunFam" id="1.20.5.700:FF:000001">
    <property type="entry name" value="Cytochrome f"/>
    <property type="match status" value="1"/>
</dbReference>
<dbReference type="FunFam" id="2.40.50.100:FF:000007">
    <property type="entry name" value="Cytochrome f"/>
    <property type="match status" value="1"/>
</dbReference>
<dbReference type="FunFam" id="2.60.40.830:FF:000001">
    <property type="entry name" value="Cytochrome f"/>
    <property type="match status" value="1"/>
</dbReference>
<dbReference type="Gene3D" id="2.40.50.100">
    <property type="match status" value="1"/>
</dbReference>
<dbReference type="Gene3D" id="2.60.40.830">
    <property type="entry name" value="Cytochrome f large domain"/>
    <property type="match status" value="1"/>
</dbReference>
<dbReference type="Gene3D" id="1.20.5.700">
    <property type="entry name" value="Single helix bin"/>
    <property type="match status" value="1"/>
</dbReference>
<dbReference type="HAMAP" id="MF_00610">
    <property type="entry name" value="Cytb6_f_cytF"/>
    <property type="match status" value="1"/>
</dbReference>
<dbReference type="InterPro" id="IPR024058">
    <property type="entry name" value="Cyt-f_TM"/>
</dbReference>
<dbReference type="InterPro" id="IPR002325">
    <property type="entry name" value="Cyt_f"/>
</dbReference>
<dbReference type="InterPro" id="IPR024094">
    <property type="entry name" value="Cyt_f_lg_dom"/>
</dbReference>
<dbReference type="InterPro" id="IPR036826">
    <property type="entry name" value="Cyt_f_lg_dom_sf"/>
</dbReference>
<dbReference type="InterPro" id="IPR011054">
    <property type="entry name" value="Rudment_hybrid_motif"/>
</dbReference>
<dbReference type="PANTHER" id="PTHR33288">
    <property type="match status" value="1"/>
</dbReference>
<dbReference type="PANTHER" id="PTHR33288:SF10">
    <property type="entry name" value="CYTOCHROME F"/>
    <property type="match status" value="1"/>
</dbReference>
<dbReference type="Pfam" id="PF01333">
    <property type="entry name" value="Apocytochr_F_C"/>
    <property type="match status" value="1"/>
</dbReference>
<dbReference type="Pfam" id="PF16639">
    <property type="entry name" value="Apocytochr_F_N"/>
    <property type="match status" value="1"/>
</dbReference>
<dbReference type="PRINTS" id="PR00610">
    <property type="entry name" value="CYTOCHROMEF"/>
</dbReference>
<dbReference type="SUPFAM" id="SSF103431">
    <property type="entry name" value="Cytochrome f subunit of the cytochrome b6f complex, transmembrane anchor"/>
    <property type="match status" value="1"/>
</dbReference>
<dbReference type="SUPFAM" id="SSF49441">
    <property type="entry name" value="Cytochrome f, large domain"/>
    <property type="match status" value="1"/>
</dbReference>
<dbReference type="SUPFAM" id="SSF51246">
    <property type="entry name" value="Rudiment single hybrid motif"/>
    <property type="match status" value="1"/>
</dbReference>
<dbReference type="PROSITE" id="PS51010">
    <property type="entry name" value="CYTF"/>
    <property type="match status" value="1"/>
</dbReference>
<geneLocation type="chloroplast"/>